<feature type="chain" id="PRO_1000067452" description="C4-dicarboxylate transport protein">
    <location>
        <begin position="1"/>
        <end position="444"/>
    </location>
</feature>
<feature type="transmembrane region" description="Helical" evidence="1">
    <location>
        <begin position="21"/>
        <end position="41"/>
    </location>
</feature>
<feature type="transmembrane region" description="Helical" evidence="1">
    <location>
        <begin position="57"/>
        <end position="77"/>
    </location>
</feature>
<feature type="transmembrane region" description="Helical" evidence="1">
    <location>
        <begin position="92"/>
        <end position="112"/>
    </location>
</feature>
<feature type="transmembrane region" description="Helical" evidence="1">
    <location>
        <begin position="161"/>
        <end position="181"/>
    </location>
</feature>
<feature type="transmembrane region" description="Helical" evidence="1">
    <location>
        <begin position="201"/>
        <end position="221"/>
    </location>
</feature>
<feature type="transmembrane region" description="Helical" evidence="1">
    <location>
        <begin position="234"/>
        <end position="254"/>
    </location>
</feature>
<feature type="transmembrane region" description="Helical" evidence="1">
    <location>
        <begin position="320"/>
        <end position="340"/>
    </location>
</feature>
<feature type="transmembrane region" description="Helical" evidence="1">
    <location>
        <begin position="345"/>
        <end position="365"/>
    </location>
</feature>
<feature type="transmembrane region" description="Helical" evidence="1">
    <location>
        <begin position="368"/>
        <end position="388"/>
    </location>
</feature>
<sequence length="444" mass="46299">MIAVPTGAAAAPRGPIPFYKHLYVQVLVAIAAGILLGHFYPELGTQLKPLGDAFIKLVKMIIAPVIFLTVATGIAGMTDMKKVGRVAGKAMIYFLTFSTLALIIGLIVANVVQPGAGMHIDPASLDPKAVANYAAKAHEQTITGFLSNIIPTTIVGAFADGDILQVLFFSVLFGIALALVGDKGKPVTDFLHVLTAPVFKLVSILMKAAPIGAFGAMAFTIGKYGIGSIANLALLIGTFYLTALLFVLVVLGAVARYNGFSILALIRYIKEELLLVLGTSSSEAALPALMDKMEKAGCKRSVVGLVIPTGYSFNLDGTNIYMTLAALFIAQATDIPLSLSDQILLLLVAMLSSKGAAGITGAGFITLAATLSVVPAVPVAGMALILGIDRFMSECRALTNLVGNAVATIVVARWENELDTDKLAAAMNGTPVVTDLVPQLEPAE</sequence>
<dbReference type="EMBL" id="CP000759">
    <property type="protein sequence ID" value="ABS16186.1"/>
    <property type="molecule type" value="Genomic_DNA"/>
</dbReference>
<dbReference type="RefSeq" id="WP_012092900.1">
    <property type="nucleotide sequence ID" value="NC_009668.1"/>
</dbReference>
<dbReference type="SMR" id="A6X4N2"/>
<dbReference type="STRING" id="439375.Oant_3480"/>
<dbReference type="KEGG" id="oan:Oant_3480"/>
<dbReference type="PATRIC" id="fig|439375.7.peg.3639"/>
<dbReference type="eggNOG" id="COG1301">
    <property type="taxonomic scope" value="Bacteria"/>
</dbReference>
<dbReference type="HOGENOM" id="CLU_019375_7_0_5"/>
<dbReference type="Proteomes" id="UP000002301">
    <property type="component" value="Chromosome 2"/>
</dbReference>
<dbReference type="GO" id="GO:0005886">
    <property type="term" value="C:plasma membrane"/>
    <property type="evidence" value="ECO:0007669"/>
    <property type="project" value="UniProtKB-SubCell"/>
</dbReference>
<dbReference type="GO" id="GO:0015138">
    <property type="term" value="F:fumarate transmembrane transporter activity"/>
    <property type="evidence" value="ECO:0007669"/>
    <property type="project" value="TreeGrafter"/>
</dbReference>
<dbReference type="GO" id="GO:0015366">
    <property type="term" value="F:malate:proton symporter activity"/>
    <property type="evidence" value="ECO:0007669"/>
    <property type="project" value="TreeGrafter"/>
</dbReference>
<dbReference type="GO" id="GO:0015141">
    <property type="term" value="F:succinate transmembrane transporter activity"/>
    <property type="evidence" value="ECO:0007669"/>
    <property type="project" value="TreeGrafter"/>
</dbReference>
<dbReference type="GO" id="GO:0070778">
    <property type="term" value="P:L-aspartate transmembrane transport"/>
    <property type="evidence" value="ECO:0007669"/>
    <property type="project" value="TreeGrafter"/>
</dbReference>
<dbReference type="FunFam" id="1.10.3860.10:FF:000001">
    <property type="entry name" value="C4-dicarboxylate transport protein"/>
    <property type="match status" value="1"/>
</dbReference>
<dbReference type="Gene3D" id="1.10.3860.10">
    <property type="entry name" value="Sodium:dicarboxylate symporter"/>
    <property type="match status" value="1"/>
</dbReference>
<dbReference type="HAMAP" id="MF_01300">
    <property type="entry name" value="C4_dicarb_transport"/>
    <property type="match status" value="1"/>
</dbReference>
<dbReference type="InterPro" id="IPR023954">
    <property type="entry name" value="C4_dicarb_transport"/>
</dbReference>
<dbReference type="InterPro" id="IPR001991">
    <property type="entry name" value="Na-dicarboxylate_symporter"/>
</dbReference>
<dbReference type="InterPro" id="IPR018107">
    <property type="entry name" value="Na-dicarboxylate_symporter_CS"/>
</dbReference>
<dbReference type="InterPro" id="IPR036458">
    <property type="entry name" value="Na:dicarbo_symporter_sf"/>
</dbReference>
<dbReference type="NCBIfam" id="NF002461">
    <property type="entry name" value="PRK01663.1"/>
    <property type="match status" value="1"/>
</dbReference>
<dbReference type="NCBIfam" id="NF009587">
    <property type="entry name" value="PRK13027.1"/>
    <property type="match status" value="1"/>
</dbReference>
<dbReference type="PANTHER" id="PTHR42865:SF1">
    <property type="entry name" value="AEROBIC C4-DICARBOXYLATE TRANSPORT PROTEIN"/>
    <property type="match status" value="1"/>
</dbReference>
<dbReference type="PANTHER" id="PTHR42865">
    <property type="entry name" value="PROTON/GLUTAMATE-ASPARTATE SYMPORTER"/>
    <property type="match status" value="1"/>
</dbReference>
<dbReference type="Pfam" id="PF00375">
    <property type="entry name" value="SDF"/>
    <property type="match status" value="1"/>
</dbReference>
<dbReference type="PRINTS" id="PR00173">
    <property type="entry name" value="EDTRNSPORT"/>
</dbReference>
<dbReference type="SUPFAM" id="SSF118215">
    <property type="entry name" value="Proton glutamate symport protein"/>
    <property type="match status" value="1"/>
</dbReference>
<dbReference type="PROSITE" id="PS00713">
    <property type="entry name" value="NA_DICARBOXYL_SYMP_1"/>
    <property type="match status" value="1"/>
</dbReference>
<dbReference type="PROSITE" id="PS00714">
    <property type="entry name" value="NA_DICARBOXYL_SYMP_2"/>
    <property type="match status" value="1"/>
</dbReference>
<comment type="function">
    <text evidence="1">Responsible for the transport of dicarboxylates such as succinate, fumarate, and malate from the periplasm across the membrane.</text>
</comment>
<comment type="subcellular location">
    <subcellularLocation>
        <location evidence="1">Cell inner membrane</location>
        <topology evidence="1">Multi-pass membrane protein</topology>
    </subcellularLocation>
</comment>
<comment type="similarity">
    <text evidence="1">Belongs to the dicarboxylate/amino acid:cation symporter (DAACS) (TC 2.A.23) family.</text>
</comment>
<accession>A6X4N2</accession>
<keyword id="KW-0997">Cell inner membrane</keyword>
<keyword id="KW-1003">Cell membrane</keyword>
<keyword id="KW-0472">Membrane</keyword>
<keyword id="KW-1185">Reference proteome</keyword>
<keyword id="KW-0769">Symport</keyword>
<keyword id="KW-0812">Transmembrane</keyword>
<keyword id="KW-1133">Transmembrane helix</keyword>
<keyword id="KW-0813">Transport</keyword>
<reference key="1">
    <citation type="journal article" date="2011" name="J. Bacteriol.">
        <title>Genome of Ochrobactrum anthropi ATCC 49188 T, a versatile opportunistic pathogen and symbiont of several eukaryotic hosts.</title>
        <authorList>
            <person name="Chain P.S."/>
            <person name="Lang D.M."/>
            <person name="Comerci D.J."/>
            <person name="Malfatti S.A."/>
            <person name="Vergez L.M."/>
            <person name="Shin M."/>
            <person name="Ugalde R.A."/>
            <person name="Garcia E."/>
            <person name="Tolmasky M.E."/>
        </authorList>
    </citation>
    <scope>NUCLEOTIDE SEQUENCE [LARGE SCALE GENOMIC DNA]</scope>
    <source>
        <strain>ATCC 49188 / DSM 6882 / CCUG 24695 / JCM 21032 / LMG 3331 / NBRC 15819 / NCTC 12168 / Alc 37</strain>
    </source>
</reference>
<name>DCTA_BRUA4</name>
<evidence type="ECO:0000255" key="1">
    <source>
        <dbReference type="HAMAP-Rule" id="MF_01300"/>
    </source>
</evidence>
<protein>
    <recommendedName>
        <fullName evidence="1">C4-dicarboxylate transport protein</fullName>
    </recommendedName>
</protein>
<proteinExistence type="inferred from homology"/>
<organism>
    <name type="scientific">Brucella anthropi (strain ATCC 49188 / DSM 6882 / CCUG 24695 / JCM 21032 / LMG 3331 / NBRC 15819 / NCTC 12168 / Alc 37)</name>
    <name type="common">Ochrobactrum anthropi</name>
    <dbReference type="NCBI Taxonomy" id="439375"/>
    <lineage>
        <taxon>Bacteria</taxon>
        <taxon>Pseudomonadati</taxon>
        <taxon>Pseudomonadota</taxon>
        <taxon>Alphaproteobacteria</taxon>
        <taxon>Hyphomicrobiales</taxon>
        <taxon>Brucellaceae</taxon>
        <taxon>Brucella/Ochrobactrum group</taxon>
        <taxon>Brucella</taxon>
    </lineage>
</organism>
<gene>
    <name evidence="1" type="primary">dctA</name>
    <name type="ordered locus">Oant_3480</name>
</gene>